<dbReference type="EMBL" id="AF437291">
    <property type="protein sequence ID" value="AAM34590.1"/>
    <property type="molecule type" value="Genomic_DNA"/>
</dbReference>
<dbReference type="RefSeq" id="NP_644680.1">
    <property type="nucleotide sequence ID" value="NC_003920.1"/>
</dbReference>
<dbReference type="SMR" id="Q8M354"/>
<dbReference type="FunCoup" id="Q8M354">
    <property type="interactions" value="684"/>
</dbReference>
<dbReference type="STRING" id="1064592.Q8M354"/>
<dbReference type="GeneID" id="804906"/>
<dbReference type="InParanoid" id="Q8M354"/>
<dbReference type="Proteomes" id="UP000001640">
    <property type="component" value="Mitochondrion"/>
</dbReference>
<dbReference type="GO" id="GO:0005743">
    <property type="term" value="C:mitochondrial inner membrane"/>
    <property type="evidence" value="ECO:0007669"/>
    <property type="project" value="UniProtKB-SubCell"/>
</dbReference>
<dbReference type="GO" id="GO:0045275">
    <property type="term" value="C:respiratory chain complex III"/>
    <property type="evidence" value="ECO:0007669"/>
    <property type="project" value="InterPro"/>
</dbReference>
<dbReference type="GO" id="GO:0046872">
    <property type="term" value="F:metal ion binding"/>
    <property type="evidence" value="ECO:0007669"/>
    <property type="project" value="UniProtKB-KW"/>
</dbReference>
<dbReference type="GO" id="GO:0008121">
    <property type="term" value="F:ubiquinol-cytochrome-c reductase activity"/>
    <property type="evidence" value="ECO:0007669"/>
    <property type="project" value="InterPro"/>
</dbReference>
<dbReference type="GO" id="GO:0006122">
    <property type="term" value="P:mitochondrial electron transport, ubiquinol to cytochrome c"/>
    <property type="evidence" value="ECO:0007669"/>
    <property type="project" value="TreeGrafter"/>
</dbReference>
<dbReference type="CDD" id="cd00290">
    <property type="entry name" value="cytochrome_b_C"/>
    <property type="match status" value="1"/>
</dbReference>
<dbReference type="CDD" id="cd00284">
    <property type="entry name" value="Cytochrome_b_N"/>
    <property type="match status" value="1"/>
</dbReference>
<dbReference type="FunFam" id="1.20.810.10:FF:000002">
    <property type="entry name" value="Cytochrome b"/>
    <property type="match status" value="1"/>
</dbReference>
<dbReference type="Gene3D" id="1.20.810.10">
    <property type="entry name" value="Cytochrome Bc1 Complex, Chain C"/>
    <property type="match status" value="1"/>
</dbReference>
<dbReference type="InterPro" id="IPR005798">
    <property type="entry name" value="Cyt_b/b6_C"/>
</dbReference>
<dbReference type="InterPro" id="IPR036150">
    <property type="entry name" value="Cyt_b/b6_C_sf"/>
</dbReference>
<dbReference type="InterPro" id="IPR005797">
    <property type="entry name" value="Cyt_b/b6_N"/>
</dbReference>
<dbReference type="InterPro" id="IPR027387">
    <property type="entry name" value="Cytb/b6-like_sf"/>
</dbReference>
<dbReference type="InterPro" id="IPR030689">
    <property type="entry name" value="Cytochrome_b"/>
</dbReference>
<dbReference type="InterPro" id="IPR048260">
    <property type="entry name" value="Cytochrome_b_C_euk/bac"/>
</dbReference>
<dbReference type="InterPro" id="IPR048259">
    <property type="entry name" value="Cytochrome_b_N_euk/bac"/>
</dbReference>
<dbReference type="InterPro" id="IPR016174">
    <property type="entry name" value="Di-haem_cyt_TM"/>
</dbReference>
<dbReference type="PANTHER" id="PTHR19271">
    <property type="entry name" value="CYTOCHROME B"/>
    <property type="match status" value="1"/>
</dbReference>
<dbReference type="PANTHER" id="PTHR19271:SF16">
    <property type="entry name" value="CYTOCHROME B"/>
    <property type="match status" value="1"/>
</dbReference>
<dbReference type="Pfam" id="PF00032">
    <property type="entry name" value="Cytochrom_B_C"/>
    <property type="match status" value="1"/>
</dbReference>
<dbReference type="Pfam" id="PF00033">
    <property type="entry name" value="Cytochrome_B"/>
    <property type="match status" value="1"/>
</dbReference>
<dbReference type="PIRSF" id="PIRSF038885">
    <property type="entry name" value="COB"/>
    <property type="match status" value="1"/>
</dbReference>
<dbReference type="SUPFAM" id="SSF81648">
    <property type="entry name" value="a domain/subunit of cytochrome bc1 complex (Ubiquinol-cytochrome c reductase)"/>
    <property type="match status" value="1"/>
</dbReference>
<dbReference type="SUPFAM" id="SSF81342">
    <property type="entry name" value="Transmembrane di-heme cytochromes"/>
    <property type="match status" value="1"/>
</dbReference>
<dbReference type="PROSITE" id="PS51003">
    <property type="entry name" value="CYTB_CTER"/>
    <property type="match status" value="1"/>
</dbReference>
<dbReference type="PROSITE" id="PS51002">
    <property type="entry name" value="CYTB_NTER"/>
    <property type="match status" value="1"/>
</dbReference>
<sequence>MTFRKSNVYLNLVNSYIIDSPQPSSINYWWNMGSLLGLCLVIQILTGIFMAMHYSSNIELAFSSVEHIMRDVQGGWFLRYAHANGASFFFICMYIHMGKALYYGSYRSPRVLLWTIGVIIFILTMATAFLGYCCVYGQMSHWGATVITNLFSAIPFIGKDIVLWLWGGFAVSNPTIQRFFALHYLFPFVIAAVVIMHMMALHIHGSSNPLGITGNMDRLPMHGYFVFKDLITVFVFLIVFSLFVFFSPNTMGHPDNYIPGNPMVTPASIVPEWYLLPFYAILRSIPDKLMGVITMFSAILVLLVLPFTDRSVVRGNSFKVLSKLFFFLFVFNFVLLGQIGAVHVEVPYILMGQISTFLYFAYFLVFIPIISTIENILFYVGSRNNTDDLK</sequence>
<reference key="1">
    <citation type="journal article" date="2002" name="J. Mol. Biol.">
        <title>Inheritance and organisation of the mitochondrial genome differ between two Saccharomyces yeasts.</title>
        <authorList>
            <person name="Petersen R.F."/>
            <person name="Langkjaer R.B."/>
            <person name="Hvidtfeldt J."/>
            <person name="Gartner J."/>
            <person name="Palmen W."/>
            <person name="Ussery D.W."/>
            <person name="Piskur J."/>
        </authorList>
    </citation>
    <scope>NUCLEOTIDE SEQUENCE [LARGE SCALE GENOMIC DNA]</scope>
    <source>
        <strain>ATCC 76901 / BCRC 22586 / CBS 4309 / NBRC 1992 / NRRL Y-12630</strain>
    </source>
</reference>
<proteinExistence type="inferred from homology"/>
<protein>
    <recommendedName>
        <fullName>Cytochrome b</fullName>
    </recommendedName>
    <alternativeName>
        <fullName>Complex III subunit 3</fullName>
    </alternativeName>
    <alternativeName>
        <fullName>Complex III subunit III</fullName>
    </alternativeName>
    <alternativeName>
        <fullName>Cytochrome b-c1 complex subunit 3</fullName>
    </alternativeName>
    <alternativeName>
        <fullName>Ubiquinol-cytochrome-c reductase complex cytochrome b subunit</fullName>
    </alternativeName>
</protein>
<feature type="chain" id="PRO_0000061756" description="Cytochrome b">
    <location>
        <begin position="1"/>
        <end position="390"/>
    </location>
</feature>
<feature type="transmembrane region" description="Helical" evidence="3">
    <location>
        <begin position="32"/>
        <end position="52"/>
    </location>
</feature>
<feature type="transmembrane region" description="Helical" evidence="3">
    <location>
        <begin position="76"/>
        <end position="98"/>
    </location>
</feature>
<feature type="transmembrane region" description="Helical" evidence="3">
    <location>
        <begin position="113"/>
        <end position="133"/>
    </location>
</feature>
<feature type="transmembrane region" description="Helical" evidence="3">
    <location>
        <begin position="179"/>
        <end position="199"/>
    </location>
</feature>
<feature type="transmembrane region" description="Helical" evidence="3">
    <location>
        <begin position="225"/>
        <end position="245"/>
    </location>
</feature>
<feature type="transmembrane region" description="Helical" evidence="3">
    <location>
        <begin position="289"/>
        <end position="309"/>
    </location>
</feature>
<feature type="transmembrane region" description="Helical" evidence="3">
    <location>
        <begin position="321"/>
        <end position="341"/>
    </location>
</feature>
<feature type="transmembrane region" description="Helical" evidence="3">
    <location>
        <begin position="348"/>
        <end position="368"/>
    </location>
</feature>
<feature type="binding site" description="axial binding residue" evidence="5">
    <location>
        <position position="82"/>
    </location>
    <ligand>
        <name>heme b</name>
        <dbReference type="ChEBI" id="CHEBI:60344"/>
        <label>b562</label>
    </ligand>
    <ligandPart>
        <name>Fe</name>
        <dbReference type="ChEBI" id="CHEBI:18248"/>
    </ligandPart>
</feature>
<feature type="binding site" description="axial binding residue" evidence="5">
    <location>
        <position position="96"/>
    </location>
    <ligand>
        <name>heme b</name>
        <dbReference type="ChEBI" id="CHEBI:60344"/>
        <label>b566</label>
    </ligand>
    <ligandPart>
        <name>Fe</name>
        <dbReference type="ChEBI" id="CHEBI:18248"/>
    </ligandPart>
</feature>
<feature type="binding site" description="axial binding residue" evidence="5">
    <location>
        <position position="183"/>
    </location>
    <ligand>
        <name>heme b</name>
        <dbReference type="ChEBI" id="CHEBI:60344"/>
        <label>b562</label>
    </ligand>
    <ligandPart>
        <name>Fe</name>
        <dbReference type="ChEBI" id="CHEBI:18248"/>
    </ligandPart>
</feature>
<feature type="binding site" description="axial binding residue" evidence="5">
    <location>
        <position position="197"/>
    </location>
    <ligand>
        <name>heme b</name>
        <dbReference type="ChEBI" id="CHEBI:60344"/>
        <label>b566</label>
    </ligand>
    <ligandPart>
        <name>Fe</name>
        <dbReference type="ChEBI" id="CHEBI:18248"/>
    </ligandPart>
</feature>
<feature type="binding site" evidence="2">
    <location>
        <position position="202"/>
    </location>
    <ligand>
        <name>a ubiquinone</name>
        <dbReference type="ChEBI" id="CHEBI:16389"/>
    </ligand>
</feature>
<keyword id="KW-0249">Electron transport</keyword>
<keyword id="KW-0349">Heme</keyword>
<keyword id="KW-0408">Iron</keyword>
<keyword id="KW-0472">Membrane</keyword>
<keyword id="KW-0479">Metal-binding</keyword>
<keyword id="KW-0496">Mitochondrion</keyword>
<keyword id="KW-0999">Mitochondrion inner membrane</keyword>
<keyword id="KW-1185">Reference proteome</keyword>
<keyword id="KW-0679">Respiratory chain</keyword>
<keyword id="KW-0812">Transmembrane</keyword>
<keyword id="KW-1133">Transmembrane helix</keyword>
<keyword id="KW-0813">Transport</keyword>
<keyword id="KW-0830">Ubiquinone</keyword>
<comment type="function">
    <text evidence="3">Component of the ubiquinol-cytochrome c reductase complex (complex III or cytochrome b-c1 complex) that is part of the mitochondrial respiratory chain. The b-c1 complex mediates electron transfer from ubiquinol to cytochrome c. Contributes to the generation of a proton gradient across the mitochondrial membrane that is then used for ATP synthesis.</text>
</comment>
<comment type="cofactor">
    <cofactor evidence="3">
        <name>heme b</name>
        <dbReference type="ChEBI" id="CHEBI:60344"/>
    </cofactor>
    <text evidence="3">Binds 2 heme b groups non-covalently.</text>
</comment>
<comment type="subunit">
    <text evidence="3">Fungal cytochrome b-c1 complex contains 10 subunits; 3 respiratory subunits, 2 core proteins and 5 low-molecular weight proteins. Cytochrome b-c1 complex is a homodimer.</text>
</comment>
<comment type="subcellular location">
    <subcellularLocation>
        <location evidence="3">Mitochondrion inner membrane</location>
        <topology evidence="3">Multi-pass membrane protein</topology>
    </subcellularLocation>
</comment>
<comment type="miscellaneous">
    <text evidence="1">Heme 1 (or BL or b562) is low-potential and absorbs at about 562 nm, and heme 2 (or BH or b566) is high-potential and absorbs at about 566 nm.</text>
</comment>
<comment type="similarity">
    <text evidence="4 5">Belongs to the cytochrome b family.</text>
</comment>
<comment type="caution">
    <text evidence="3">The protein contains only eight transmembrane helices, not nine as predicted by bioinformatics tools.</text>
</comment>
<accession>Q8M354</accession>
<evidence type="ECO:0000250" key="1"/>
<evidence type="ECO:0000250" key="2">
    <source>
        <dbReference type="UniProtKB" id="P00157"/>
    </source>
</evidence>
<evidence type="ECO:0000250" key="3">
    <source>
        <dbReference type="UniProtKB" id="P00163"/>
    </source>
</evidence>
<evidence type="ECO:0000255" key="4">
    <source>
        <dbReference type="PROSITE-ProRule" id="PRU00967"/>
    </source>
</evidence>
<evidence type="ECO:0000255" key="5">
    <source>
        <dbReference type="PROSITE-ProRule" id="PRU00968"/>
    </source>
</evidence>
<name>CYB_NAUCA</name>
<geneLocation type="mitochondrion"/>
<organism>
    <name type="scientific">Naumovozyma castellii</name>
    <name type="common">Yeast</name>
    <name type="synonym">Saccharomyces castellii</name>
    <dbReference type="NCBI Taxonomy" id="27288"/>
    <lineage>
        <taxon>Eukaryota</taxon>
        <taxon>Fungi</taxon>
        <taxon>Dikarya</taxon>
        <taxon>Ascomycota</taxon>
        <taxon>Saccharomycotina</taxon>
        <taxon>Saccharomycetes</taxon>
        <taxon>Saccharomycetales</taxon>
        <taxon>Saccharomycetaceae</taxon>
        <taxon>Naumovozyma</taxon>
    </lineage>
</organism>
<gene>
    <name type="primary">COB</name>
    <name type="synonym">CYTB</name>
</gene>